<comment type="catalytic activity">
    <reaction evidence="1">
        <text>L-glutamate + NH4(+) + ATP = L-glutamine + ADP + phosphate + H(+)</text>
        <dbReference type="Rhea" id="RHEA:16169"/>
        <dbReference type="ChEBI" id="CHEBI:15378"/>
        <dbReference type="ChEBI" id="CHEBI:28938"/>
        <dbReference type="ChEBI" id="CHEBI:29985"/>
        <dbReference type="ChEBI" id="CHEBI:30616"/>
        <dbReference type="ChEBI" id="CHEBI:43474"/>
        <dbReference type="ChEBI" id="CHEBI:58359"/>
        <dbReference type="ChEBI" id="CHEBI:456216"/>
        <dbReference type="EC" id="6.3.1.2"/>
    </reaction>
</comment>
<comment type="subunit">
    <text evidence="1">Homooctamer.</text>
</comment>
<comment type="subcellular location">
    <subcellularLocation>
        <location evidence="5">Cytoplasm</location>
    </subcellularLocation>
</comment>
<comment type="induction">
    <text evidence="3">By E.ampelina infection.</text>
</comment>
<comment type="similarity">
    <text evidence="2">Belongs to the glutamine synthetase family.</text>
</comment>
<proteinExistence type="evidence at protein level"/>
<protein>
    <recommendedName>
        <fullName>Glutamine synthetase</fullName>
        <ecNumber>6.3.1.2</ecNumber>
    </recommendedName>
    <alternativeName>
        <fullName>Glutamate--ammonia ligase</fullName>
    </alternativeName>
</protein>
<feature type="chain" id="PRO_0000280228" description="Glutamine synthetase">
    <location>
        <begin position="1"/>
        <end position="51" status="greater than"/>
    </location>
</feature>
<feature type="non-consecutive residues" evidence="4">
    <location>
        <begin position="11"/>
        <end position="12"/>
    </location>
</feature>
<feature type="non-consecutive residues" evidence="4">
    <location>
        <begin position="21"/>
        <end position="22"/>
    </location>
</feature>
<feature type="non-consecutive residues" evidence="4">
    <location>
        <begin position="35"/>
        <end position="36"/>
    </location>
</feature>
<feature type="non-terminal residue" evidence="4">
    <location>
        <position position="51"/>
    </location>
</feature>
<name>GLNA_VITSX</name>
<accession>P85087</accession>
<dbReference type="EC" id="6.3.1.2"/>
<dbReference type="GO" id="GO:0005737">
    <property type="term" value="C:cytoplasm"/>
    <property type="evidence" value="ECO:0007669"/>
    <property type="project" value="UniProtKB-SubCell"/>
</dbReference>
<dbReference type="GO" id="GO:0005524">
    <property type="term" value="F:ATP binding"/>
    <property type="evidence" value="ECO:0007669"/>
    <property type="project" value="UniProtKB-KW"/>
</dbReference>
<dbReference type="GO" id="GO:0004356">
    <property type="term" value="F:glutamine synthetase activity"/>
    <property type="evidence" value="ECO:0007669"/>
    <property type="project" value="UniProtKB-EC"/>
</dbReference>
<evidence type="ECO:0000250" key="1">
    <source>
        <dbReference type="UniProtKB" id="Q56WN1"/>
    </source>
</evidence>
<evidence type="ECO:0000255" key="2"/>
<evidence type="ECO:0000269" key="3">
    <source>
    </source>
</evidence>
<evidence type="ECO:0000303" key="4">
    <source>
    </source>
</evidence>
<evidence type="ECO:0000305" key="5"/>
<sequence>TLSGPVSDPAKNDGGFEVIKKHKEHIAAYGEGNERHETADINTFLWGVANR</sequence>
<organism>
    <name type="scientific">Vitis sp.</name>
    <name type="common">Grape</name>
    <dbReference type="NCBI Taxonomy" id="3604"/>
    <lineage>
        <taxon>Eukaryota</taxon>
        <taxon>Viridiplantae</taxon>
        <taxon>Streptophyta</taxon>
        <taxon>Embryophyta</taxon>
        <taxon>Tracheophyta</taxon>
        <taxon>Spermatophyta</taxon>
        <taxon>Magnoliopsida</taxon>
        <taxon>eudicotyledons</taxon>
        <taxon>Gunneridae</taxon>
        <taxon>Pentapetalae</taxon>
        <taxon>rosids</taxon>
        <taxon>Vitales</taxon>
        <taxon>Vitaceae</taxon>
        <taxon>Viteae</taxon>
        <taxon>Vitis</taxon>
    </lineage>
</organism>
<reference evidence="5" key="1">
    <citation type="journal article" date="2009" name="Appl. Biochem. Biotechnol.">
        <title>Characterization of unique and differentially expressed proteins in anthracnose-tolerant Florida hybrid bunch grapes.</title>
        <authorList>
            <person name="Vasanthaiah H.K.N."/>
            <person name="Katam R."/>
            <person name="Basha S.M."/>
        </authorList>
    </citation>
    <scope>PROTEIN SEQUENCE</scope>
    <scope>INDUCTION</scope>
    <source>
        <strain evidence="3">V.simpsonii cv. Pixiola X V.vinifera cv. Golden Muscat</strain>
        <tissue evidence="3">Leaf</tissue>
    </source>
</reference>
<keyword id="KW-0067">ATP-binding</keyword>
<keyword id="KW-0963">Cytoplasm</keyword>
<keyword id="KW-0903">Direct protein sequencing</keyword>
<keyword id="KW-0436">Ligase</keyword>
<keyword id="KW-0535">Nitrogen fixation</keyword>
<keyword id="KW-0547">Nucleotide-binding</keyword>